<dbReference type="EC" id="2.7.4.3" evidence="1"/>
<dbReference type="EMBL" id="AL935263">
    <property type="protein sequence ID" value="CCC78465.1"/>
    <property type="molecule type" value="Genomic_DNA"/>
</dbReference>
<dbReference type="RefSeq" id="YP_004888979.1">
    <property type="nucleotide sequence ID" value="NC_004567.2"/>
</dbReference>
<dbReference type="SMR" id="Q88XW5"/>
<dbReference type="STRING" id="220668.lp_1058"/>
<dbReference type="EnsemblBacteria" id="CCC78465">
    <property type="protein sequence ID" value="CCC78465"/>
    <property type="gene ID" value="lp_1058"/>
</dbReference>
<dbReference type="KEGG" id="lpl:lp_1058"/>
<dbReference type="PATRIC" id="fig|220668.9.peg.892"/>
<dbReference type="eggNOG" id="COG0563">
    <property type="taxonomic scope" value="Bacteria"/>
</dbReference>
<dbReference type="HOGENOM" id="CLU_032354_1_2_9"/>
<dbReference type="OrthoDB" id="9805030at2"/>
<dbReference type="PhylomeDB" id="Q88XW5"/>
<dbReference type="UniPathway" id="UPA00588">
    <property type="reaction ID" value="UER00649"/>
</dbReference>
<dbReference type="Proteomes" id="UP000000432">
    <property type="component" value="Chromosome"/>
</dbReference>
<dbReference type="GO" id="GO:0005737">
    <property type="term" value="C:cytoplasm"/>
    <property type="evidence" value="ECO:0007669"/>
    <property type="project" value="UniProtKB-SubCell"/>
</dbReference>
<dbReference type="GO" id="GO:0004017">
    <property type="term" value="F:adenylate kinase activity"/>
    <property type="evidence" value="ECO:0007669"/>
    <property type="project" value="UniProtKB-UniRule"/>
</dbReference>
<dbReference type="GO" id="GO:0005524">
    <property type="term" value="F:ATP binding"/>
    <property type="evidence" value="ECO:0007669"/>
    <property type="project" value="UniProtKB-UniRule"/>
</dbReference>
<dbReference type="GO" id="GO:0008270">
    <property type="term" value="F:zinc ion binding"/>
    <property type="evidence" value="ECO:0007669"/>
    <property type="project" value="UniProtKB-UniRule"/>
</dbReference>
<dbReference type="GO" id="GO:0044209">
    <property type="term" value="P:AMP salvage"/>
    <property type="evidence" value="ECO:0007669"/>
    <property type="project" value="UniProtKB-UniRule"/>
</dbReference>
<dbReference type="CDD" id="cd01428">
    <property type="entry name" value="ADK"/>
    <property type="match status" value="1"/>
</dbReference>
<dbReference type="FunFam" id="3.40.50.300:FF:000106">
    <property type="entry name" value="Adenylate kinase mitochondrial"/>
    <property type="match status" value="1"/>
</dbReference>
<dbReference type="Gene3D" id="3.40.50.300">
    <property type="entry name" value="P-loop containing nucleotide triphosphate hydrolases"/>
    <property type="match status" value="1"/>
</dbReference>
<dbReference type="HAMAP" id="MF_00235">
    <property type="entry name" value="Adenylate_kinase_Adk"/>
    <property type="match status" value="1"/>
</dbReference>
<dbReference type="InterPro" id="IPR006259">
    <property type="entry name" value="Adenyl_kin_sub"/>
</dbReference>
<dbReference type="InterPro" id="IPR000850">
    <property type="entry name" value="Adenylat/UMP-CMP_kin"/>
</dbReference>
<dbReference type="InterPro" id="IPR033690">
    <property type="entry name" value="Adenylat_kinase_CS"/>
</dbReference>
<dbReference type="InterPro" id="IPR007862">
    <property type="entry name" value="Adenylate_kinase_lid-dom"/>
</dbReference>
<dbReference type="InterPro" id="IPR027417">
    <property type="entry name" value="P-loop_NTPase"/>
</dbReference>
<dbReference type="NCBIfam" id="TIGR01351">
    <property type="entry name" value="adk"/>
    <property type="match status" value="1"/>
</dbReference>
<dbReference type="NCBIfam" id="NF001380">
    <property type="entry name" value="PRK00279.1-2"/>
    <property type="match status" value="1"/>
</dbReference>
<dbReference type="NCBIfam" id="NF001381">
    <property type="entry name" value="PRK00279.1-3"/>
    <property type="match status" value="1"/>
</dbReference>
<dbReference type="PANTHER" id="PTHR23359">
    <property type="entry name" value="NUCLEOTIDE KINASE"/>
    <property type="match status" value="1"/>
</dbReference>
<dbReference type="Pfam" id="PF00406">
    <property type="entry name" value="ADK"/>
    <property type="match status" value="1"/>
</dbReference>
<dbReference type="Pfam" id="PF05191">
    <property type="entry name" value="ADK_lid"/>
    <property type="match status" value="1"/>
</dbReference>
<dbReference type="PRINTS" id="PR00094">
    <property type="entry name" value="ADENYLTKNASE"/>
</dbReference>
<dbReference type="SUPFAM" id="SSF52540">
    <property type="entry name" value="P-loop containing nucleoside triphosphate hydrolases"/>
    <property type="match status" value="1"/>
</dbReference>
<dbReference type="PROSITE" id="PS00113">
    <property type="entry name" value="ADENYLATE_KINASE"/>
    <property type="match status" value="1"/>
</dbReference>
<protein>
    <recommendedName>
        <fullName evidence="1">Adenylate kinase</fullName>
        <shortName evidence="1">AK</shortName>
        <ecNumber evidence="1">2.7.4.3</ecNumber>
    </recommendedName>
    <alternativeName>
        <fullName evidence="1">ATP-AMP transphosphorylase</fullName>
    </alternativeName>
    <alternativeName>
        <fullName evidence="1">ATP:AMP phosphotransferase</fullName>
    </alternativeName>
    <alternativeName>
        <fullName evidence="1">Adenylate monophosphate kinase</fullName>
    </alternativeName>
</protein>
<keyword id="KW-0067">ATP-binding</keyword>
<keyword id="KW-0963">Cytoplasm</keyword>
<keyword id="KW-0418">Kinase</keyword>
<keyword id="KW-0479">Metal-binding</keyword>
<keyword id="KW-0545">Nucleotide biosynthesis</keyword>
<keyword id="KW-0547">Nucleotide-binding</keyword>
<keyword id="KW-1185">Reference proteome</keyword>
<keyword id="KW-0808">Transferase</keyword>
<keyword id="KW-0862">Zinc</keyword>
<gene>
    <name evidence="1" type="primary">adk</name>
    <name type="ordered locus">lp_1058</name>
</gene>
<comment type="function">
    <text evidence="1">Catalyzes the reversible transfer of the terminal phosphate group between ATP and AMP. Plays an important role in cellular energy homeostasis and in adenine nucleotide metabolism.</text>
</comment>
<comment type="catalytic activity">
    <reaction evidence="1">
        <text>AMP + ATP = 2 ADP</text>
        <dbReference type="Rhea" id="RHEA:12973"/>
        <dbReference type="ChEBI" id="CHEBI:30616"/>
        <dbReference type="ChEBI" id="CHEBI:456215"/>
        <dbReference type="ChEBI" id="CHEBI:456216"/>
        <dbReference type="EC" id="2.7.4.3"/>
    </reaction>
</comment>
<comment type="pathway">
    <text evidence="1">Purine metabolism; AMP biosynthesis via salvage pathway; AMP from ADP: step 1/1.</text>
</comment>
<comment type="subunit">
    <text evidence="1">Monomer.</text>
</comment>
<comment type="subcellular location">
    <subcellularLocation>
        <location evidence="1">Cytoplasm</location>
    </subcellularLocation>
</comment>
<comment type="domain">
    <text evidence="1">Consists of three domains, a large central CORE domain and two small peripheral domains, NMPbind and LID, which undergo movements during catalysis. The LID domain closes over the site of phosphoryl transfer upon ATP binding. Assembling and dissambling the active center during each catalytic cycle provides an effective means to prevent ATP hydrolysis. Some bacteria have evolved a zinc-coordinating structure that stabilizes the LID domain.</text>
</comment>
<comment type="similarity">
    <text evidence="1">Belongs to the adenylate kinase family.</text>
</comment>
<reference key="1">
    <citation type="journal article" date="2003" name="Proc. Natl. Acad. Sci. U.S.A.">
        <title>Complete genome sequence of Lactobacillus plantarum WCFS1.</title>
        <authorList>
            <person name="Kleerebezem M."/>
            <person name="Boekhorst J."/>
            <person name="van Kranenburg R."/>
            <person name="Molenaar D."/>
            <person name="Kuipers O.P."/>
            <person name="Leer R."/>
            <person name="Tarchini R."/>
            <person name="Peters S.A."/>
            <person name="Sandbrink H.M."/>
            <person name="Fiers M.W.E.J."/>
            <person name="Stiekema W."/>
            <person name="Klein Lankhorst R.M."/>
            <person name="Bron P.A."/>
            <person name="Hoffer S.M."/>
            <person name="Nierop Groot M.N."/>
            <person name="Kerkhoven R."/>
            <person name="De Vries M."/>
            <person name="Ursing B."/>
            <person name="De Vos W.M."/>
            <person name="Siezen R.J."/>
        </authorList>
    </citation>
    <scope>NUCLEOTIDE SEQUENCE [LARGE SCALE GENOMIC DNA]</scope>
    <source>
        <strain>ATCC BAA-793 / NCIMB 8826 / WCFS1</strain>
    </source>
</reference>
<reference key="2">
    <citation type="journal article" date="2012" name="J. Bacteriol.">
        <title>Complete resequencing and reannotation of the Lactobacillus plantarum WCFS1 genome.</title>
        <authorList>
            <person name="Siezen R.J."/>
            <person name="Francke C."/>
            <person name="Renckens B."/>
            <person name="Boekhorst J."/>
            <person name="Wels M."/>
            <person name="Kleerebezem M."/>
            <person name="van Hijum S.A."/>
        </authorList>
    </citation>
    <scope>NUCLEOTIDE SEQUENCE [LARGE SCALE GENOMIC DNA]</scope>
    <scope>GENOME REANNOTATION</scope>
    <source>
        <strain>ATCC BAA-793 / NCIMB 8826 / WCFS1</strain>
    </source>
</reference>
<sequence>MSTMNLILMGLPGAGKGTQAQKILEDFDIPHISTGDIFRAAIKNETKMGLEAKKYIDAGNLVPDEVTNGIVRDRLAEADTKNGFLLDGYPRNIDQAHALKQIGEELNKPLDGVINIHVEPAVLVERLSGRFICRTCGATYHKLYNKPKVEGTCDVCGGHDFYQRDDDKPATVKNRLDVNIKLNTPLIDYYGQEKLLYNVDGDRDIDDVYKDIKKILDNL</sequence>
<organism>
    <name type="scientific">Lactiplantibacillus plantarum (strain ATCC BAA-793 / NCIMB 8826 / WCFS1)</name>
    <name type="common">Lactobacillus plantarum</name>
    <dbReference type="NCBI Taxonomy" id="220668"/>
    <lineage>
        <taxon>Bacteria</taxon>
        <taxon>Bacillati</taxon>
        <taxon>Bacillota</taxon>
        <taxon>Bacilli</taxon>
        <taxon>Lactobacillales</taxon>
        <taxon>Lactobacillaceae</taxon>
        <taxon>Lactiplantibacillus</taxon>
    </lineage>
</organism>
<accession>Q88XW5</accession>
<accession>F9UMM6</accession>
<feature type="chain" id="PRO_0000158783" description="Adenylate kinase">
    <location>
        <begin position="1"/>
        <end position="219"/>
    </location>
</feature>
<feature type="region of interest" description="NMP" evidence="1">
    <location>
        <begin position="33"/>
        <end position="62"/>
    </location>
</feature>
<feature type="region of interest" description="LID" evidence="1">
    <location>
        <begin position="129"/>
        <end position="167"/>
    </location>
</feature>
<feature type="binding site" evidence="1">
    <location>
        <begin position="13"/>
        <end position="18"/>
    </location>
    <ligand>
        <name>ATP</name>
        <dbReference type="ChEBI" id="CHEBI:30616"/>
    </ligand>
</feature>
<feature type="binding site" evidence="1">
    <location>
        <position position="34"/>
    </location>
    <ligand>
        <name>AMP</name>
        <dbReference type="ChEBI" id="CHEBI:456215"/>
    </ligand>
</feature>
<feature type="binding site" evidence="1">
    <location>
        <position position="39"/>
    </location>
    <ligand>
        <name>AMP</name>
        <dbReference type="ChEBI" id="CHEBI:456215"/>
    </ligand>
</feature>
<feature type="binding site" evidence="1">
    <location>
        <begin position="60"/>
        <end position="62"/>
    </location>
    <ligand>
        <name>AMP</name>
        <dbReference type="ChEBI" id="CHEBI:456215"/>
    </ligand>
</feature>
<feature type="binding site" evidence="1">
    <location>
        <begin position="88"/>
        <end position="91"/>
    </location>
    <ligand>
        <name>AMP</name>
        <dbReference type="ChEBI" id="CHEBI:456215"/>
    </ligand>
</feature>
<feature type="binding site" evidence="1">
    <location>
        <position position="95"/>
    </location>
    <ligand>
        <name>AMP</name>
        <dbReference type="ChEBI" id="CHEBI:456215"/>
    </ligand>
</feature>
<feature type="binding site" evidence="1">
    <location>
        <position position="130"/>
    </location>
    <ligand>
        <name>ATP</name>
        <dbReference type="ChEBI" id="CHEBI:30616"/>
    </ligand>
</feature>
<feature type="binding site" evidence="1">
    <location>
        <position position="133"/>
    </location>
    <ligand>
        <name>Zn(2+)</name>
        <dbReference type="ChEBI" id="CHEBI:29105"/>
        <note>structural</note>
    </ligand>
</feature>
<feature type="binding site" evidence="1">
    <location>
        <position position="136"/>
    </location>
    <ligand>
        <name>Zn(2+)</name>
        <dbReference type="ChEBI" id="CHEBI:29105"/>
        <note>structural</note>
    </ligand>
</feature>
<feature type="binding site" evidence="1">
    <location>
        <begin position="139"/>
        <end position="140"/>
    </location>
    <ligand>
        <name>ATP</name>
        <dbReference type="ChEBI" id="CHEBI:30616"/>
    </ligand>
</feature>
<feature type="binding site" evidence="1">
    <location>
        <position position="153"/>
    </location>
    <ligand>
        <name>Zn(2+)</name>
        <dbReference type="ChEBI" id="CHEBI:29105"/>
        <note>structural</note>
    </ligand>
</feature>
<feature type="binding site" evidence="1">
    <location>
        <position position="156"/>
    </location>
    <ligand>
        <name>Zn(2+)</name>
        <dbReference type="ChEBI" id="CHEBI:29105"/>
        <note>structural</note>
    </ligand>
</feature>
<feature type="binding site" evidence="1">
    <location>
        <position position="164"/>
    </location>
    <ligand>
        <name>AMP</name>
        <dbReference type="ChEBI" id="CHEBI:456215"/>
    </ligand>
</feature>
<feature type="binding site" evidence="1">
    <location>
        <position position="175"/>
    </location>
    <ligand>
        <name>AMP</name>
        <dbReference type="ChEBI" id="CHEBI:456215"/>
    </ligand>
</feature>
<feature type="binding site" evidence="1">
    <location>
        <position position="203"/>
    </location>
    <ligand>
        <name>ATP</name>
        <dbReference type="ChEBI" id="CHEBI:30616"/>
    </ligand>
</feature>
<name>KAD_LACPL</name>
<proteinExistence type="inferred from homology"/>
<evidence type="ECO:0000255" key="1">
    <source>
        <dbReference type="HAMAP-Rule" id="MF_00235"/>
    </source>
</evidence>